<reference key="1">
    <citation type="journal article" date="2002" name="Nucleic Acids Res.">
        <title>Genome sequence of Shigella flexneri 2a: insights into pathogenicity through comparison with genomes of Escherichia coli K12 and O157.</title>
        <authorList>
            <person name="Jin Q."/>
            <person name="Yuan Z."/>
            <person name="Xu J."/>
            <person name="Wang Y."/>
            <person name="Shen Y."/>
            <person name="Lu W."/>
            <person name="Wang J."/>
            <person name="Liu H."/>
            <person name="Yang J."/>
            <person name="Yang F."/>
            <person name="Zhang X."/>
            <person name="Zhang J."/>
            <person name="Yang G."/>
            <person name="Wu H."/>
            <person name="Qu D."/>
            <person name="Dong J."/>
            <person name="Sun L."/>
            <person name="Xue Y."/>
            <person name="Zhao A."/>
            <person name="Gao Y."/>
            <person name="Zhu J."/>
            <person name="Kan B."/>
            <person name="Ding K."/>
            <person name="Chen S."/>
            <person name="Cheng H."/>
            <person name="Yao Z."/>
            <person name="He B."/>
            <person name="Chen R."/>
            <person name="Ma D."/>
            <person name="Qiang B."/>
            <person name="Wen Y."/>
            <person name="Hou Y."/>
            <person name="Yu J."/>
        </authorList>
    </citation>
    <scope>NUCLEOTIDE SEQUENCE [LARGE SCALE GENOMIC DNA]</scope>
    <source>
        <strain>301 / Serotype 2a</strain>
    </source>
</reference>
<reference key="2">
    <citation type="journal article" date="2003" name="Infect. Immun.">
        <title>Complete genome sequence and comparative genomics of Shigella flexneri serotype 2a strain 2457T.</title>
        <authorList>
            <person name="Wei J."/>
            <person name="Goldberg M.B."/>
            <person name="Burland V."/>
            <person name="Venkatesan M.M."/>
            <person name="Deng W."/>
            <person name="Fournier G."/>
            <person name="Mayhew G.F."/>
            <person name="Plunkett G. III"/>
            <person name="Rose D.J."/>
            <person name="Darling A."/>
            <person name="Mau B."/>
            <person name="Perna N.T."/>
            <person name="Payne S.M."/>
            <person name="Runyen-Janecky L.J."/>
            <person name="Zhou S."/>
            <person name="Schwartz D.C."/>
            <person name="Blattner F.R."/>
        </authorList>
    </citation>
    <scope>NUCLEOTIDE SEQUENCE [LARGE SCALE GENOMIC DNA]</scope>
    <source>
        <strain>ATCC 700930 / 2457T / Serotype 2a</strain>
    </source>
</reference>
<proteinExistence type="predicted"/>
<gene>
    <name type="primary">ybdD</name>
    <name type="ordered locus">SF0513</name>
    <name type="ordered locus">S0518.1</name>
</gene>
<accession>P0AAT1</accession>
<accession>P23518</accession>
<feature type="chain" id="PRO_0000168664" description="Uncharacterized protein YbdD">
    <location>
        <begin position="1"/>
        <end position="65"/>
    </location>
</feature>
<sequence>MFDSLAKAGKYLGQAAKLMIGMPDYDNYVEHMRVNHPDQTPMTYEEFFRERQDARYGGKGGARCC</sequence>
<evidence type="ECO:0000305" key="1"/>
<keyword id="KW-1185">Reference proteome</keyword>
<organism>
    <name type="scientific">Shigella flexneri</name>
    <dbReference type="NCBI Taxonomy" id="623"/>
    <lineage>
        <taxon>Bacteria</taxon>
        <taxon>Pseudomonadati</taxon>
        <taxon>Pseudomonadota</taxon>
        <taxon>Gammaproteobacteria</taxon>
        <taxon>Enterobacterales</taxon>
        <taxon>Enterobacteriaceae</taxon>
        <taxon>Shigella</taxon>
    </lineage>
</organism>
<dbReference type="EMBL" id="AE005674">
    <property type="protein sequence ID" value="AAN42161.1"/>
    <property type="molecule type" value="Genomic_DNA"/>
</dbReference>
<dbReference type="EMBL" id="AE014073">
    <property type="status" value="NOT_ANNOTATED_CDS"/>
    <property type="molecule type" value="Genomic_DNA"/>
</dbReference>
<dbReference type="RefSeq" id="NP_706454.1">
    <property type="nucleotide sequence ID" value="NC_004337.2"/>
</dbReference>
<dbReference type="RefSeq" id="WP_000460431.1">
    <property type="nucleotide sequence ID" value="NZ_WPGW01000083.1"/>
</dbReference>
<dbReference type="SMR" id="P0AAT1"/>
<dbReference type="STRING" id="198214.SF0513"/>
<dbReference type="PaxDb" id="198214-SF0513"/>
<dbReference type="GeneID" id="1023461"/>
<dbReference type="KEGG" id="sfl:SF0513"/>
<dbReference type="PATRIC" id="fig|198214.7.peg.596"/>
<dbReference type="HOGENOM" id="CLU_171734_1_1_6"/>
<dbReference type="Proteomes" id="UP000001006">
    <property type="component" value="Chromosome"/>
</dbReference>
<dbReference type="Proteomes" id="UP000002673">
    <property type="component" value="Chromosome"/>
</dbReference>
<dbReference type="InterPro" id="IPR007423">
    <property type="entry name" value="Sel_put"/>
</dbReference>
<dbReference type="PANTHER" id="PTHR38453:SF3">
    <property type="entry name" value="CYTOPLASMIC PROTEIN"/>
    <property type="match status" value="1"/>
</dbReference>
<dbReference type="PANTHER" id="PTHR38453">
    <property type="entry name" value="CYTOPLASMIC PROTEIN-RELATED"/>
    <property type="match status" value="1"/>
</dbReference>
<dbReference type="Pfam" id="PF04328">
    <property type="entry name" value="Sel_put"/>
    <property type="match status" value="1"/>
</dbReference>
<protein>
    <recommendedName>
        <fullName>Uncharacterized protein YbdD</fullName>
    </recommendedName>
</protein>
<name>YBDD_SHIFL</name>
<comment type="similarity">
    <text evidence="1">To E.coli YjiX.</text>
</comment>